<comment type="function">
    <text evidence="1">Catalyzes the conversion of heme O to heme A by two successive hydroxylations of the methyl group at C8. The first hydroxylation forms heme I, the second hydroxylation results in an unstable dihydroxymethyl group, which spontaneously dehydrates, resulting in the formyl group of heme A.</text>
</comment>
<comment type="catalytic activity">
    <reaction evidence="1">
        <text>Fe(II)-heme o + 2 A + H2O = Fe(II)-heme a + 2 AH2</text>
        <dbReference type="Rhea" id="RHEA:63388"/>
        <dbReference type="ChEBI" id="CHEBI:13193"/>
        <dbReference type="ChEBI" id="CHEBI:15377"/>
        <dbReference type="ChEBI" id="CHEBI:17499"/>
        <dbReference type="ChEBI" id="CHEBI:60530"/>
        <dbReference type="ChEBI" id="CHEBI:61715"/>
        <dbReference type="EC" id="1.17.99.9"/>
    </reaction>
    <physiologicalReaction direction="left-to-right" evidence="1">
        <dbReference type="Rhea" id="RHEA:63389"/>
    </physiologicalReaction>
</comment>
<comment type="cofactor">
    <cofactor evidence="1">
        <name>heme b</name>
        <dbReference type="ChEBI" id="CHEBI:60344"/>
    </cofactor>
</comment>
<comment type="pathway">
    <text evidence="1">Porphyrin-containing compound metabolism; heme A biosynthesis; heme A from heme O: step 1/1.</text>
</comment>
<comment type="subunit">
    <text evidence="1">Interacts with CtaB.</text>
</comment>
<comment type="subcellular location">
    <subcellularLocation>
        <location evidence="1">Cell membrane</location>
        <topology evidence="1">Multi-pass membrane protein</topology>
    </subcellularLocation>
</comment>
<comment type="similarity">
    <text evidence="1">Belongs to the COX15/CtaA family. Type 2 subfamily.</text>
</comment>
<sequence>MKIADNTEHVCVSVKVWLCICSIGILLMVLVGGITRLTHSGLSITEWNPVIGIFPPVSEKEWIAEKMKYMSTPEFKCLNFNITFQEFKKLYLIEYFHRLLGRIVGLIFLLPFLYFTYKKKLNKNLIVNFIIICVLILFQGVMGWLMVKSGLIDRPHVSHYRLTAHLLLALLIFYLLWRQFLSAVILNVTCNLKINNTLIFYVISILIVIQITFGSLVAGLNAGLLHKTVPFLEGRFMLEDLLFMKPLWSNIFDNPITVQFIHEVIAVLILVIVSATLLILRLNFFPSYLLLVCLLIQLTFGILTFIYNVPIALASLHQVTAFILFAINTYLLHCVKLLKLQHVKFVS</sequence>
<gene>
    <name evidence="1" type="primary">ctaA</name>
    <name type="ordered locus">Ecaj_0709</name>
</gene>
<proteinExistence type="inferred from homology"/>
<feature type="chain" id="PRO_0000349030" description="Heme A synthase">
    <location>
        <begin position="1"/>
        <end position="347"/>
    </location>
</feature>
<feature type="transmembrane region" description="Helical" evidence="1">
    <location>
        <begin position="14"/>
        <end position="34"/>
    </location>
</feature>
<feature type="transmembrane region" description="Helical" evidence="1">
    <location>
        <begin position="95"/>
        <end position="115"/>
    </location>
</feature>
<feature type="transmembrane region" description="Helical" evidence="1">
    <location>
        <begin position="125"/>
        <end position="145"/>
    </location>
</feature>
<feature type="transmembrane region" description="Helical" evidence="1">
    <location>
        <begin position="166"/>
        <end position="186"/>
    </location>
</feature>
<feature type="transmembrane region" description="Helical" evidence="1">
    <location>
        <begin position="198"/>
        <end position="218"/>
    </location>
</feature>
<feature type="transmembrane region" description="Helical" evidence="1">
    <location>
        <begin position="260"/>
        <end position="280"/>
    </location>
</feature>
<feature type="transmembrane region" description="Helical" evidence="1">
    <location>
        <begin position="289"/>
        <end position="309"/>
    </location>
</feature>
<feature type="transmembrane region" description="Helical" evidence="1">
    <location>
        <begin position="311"/>
        <end position="331"/>
    </location>
</feature>
<feature type="binding site" description="axial binding residue" evidence="1">
    <location>
        <position position="262"/>
    </location>
    <ligand>
        <name>heme</name>
        <dbReference type="ChEBI" id="CHEBI:30413"/>
    </ligand>
    <ligandPart>
        <name>Fe</name>
        <dbReference type="ChEBI" id="CHEBI:18248"/>
    </ligandPart>
</feature>
<feature type="binding site" description="axial binding residue" evidence="1">
    <location>
        <position position="317"/>
    </location>
    <ligand>
        <name>heme</name>
        <dbReference type="ChEBI" id="CHEBI:30413"/>
    </ligand>
    <ligandPart>
        <name>Fe</name>
        <dbReference type="ChEBI" id="CHEBI:18248"/>
    </ligandPart>
</feature>
<evidence type="ECO:0000255" key="1">
    <source>
        <dbReference type="HAMAP-Rule" id="MF_01665"/>
    </source>
</evidence>
<name>CTAA_EHRCJ</name>
<organism>
    <name type="scientific">Ehrlichia canis (strain Jake)</name>
    <dbReference type="NCBI Taxonomy" id="269484"/>
    <lineage>
        <taxon>Bacteria</taxon>
        <taxon>Pseudomonadati</taxon>
        <taxon>Pseudomonadota</taxon>
        <taxon>Alphaproteobacteria</taxon>
        <taxon>Rickettsiales</taxon>
        <taxon>Anaplasmataceae</taxon>
        <taxon>Ehrlichia</taxon>
    </lineage>
</organism>
<accession>Q3YRB4</accession>
<keyword id="KW-1003">Cell membrane</keyword>
<keyword id="KW-0350">Heme biosynthesis</keyword>
<keyword id="KW-0408">Iron</keyword>
<keyword id="KW-0472">Membrane</keyword>
<keyword id="KW-0479">Metal-binding</keyword>
<keyword id="KW-0560">Oxidoreductase</keyword>
<keyword id="KW-0812">Transmembrane</keyword>
<keyword id="KW-1133">Transmembrane helix</keyword>
<dbReference type="EC" id="1.17.99.9" evidence="1"/>
<dbReference type="EMBL" id="CP000107">
    <property type="protein sequence ID" value="AAZ68741.1"/>
    <property type="molecule type" value="Genomic_DNA"/>
</dbReference>
<dbReference type="RefSeq" id="WP_011304818.1">
    <property type="nucleotide sequence ID" value="NC_007354.1"/>
</dbReference>
<dbReference type="SMR" id="Q3YRB4"/>
<dbReference type="STRING" id="269484.Ecaj_0709"/>
<dbReference type="KEGG" id="ecn:Ecaj_0709"/>
<dbReference type="eggNOG" id="COG1612">
    <property type="taxonomic scope" value="Bacteria"/>
</dbReference>
<dbReference type="HOGENOM" id="CLU_017627_0_0_5"/>
<dbReference type="InParanoid" id="Q3YRB4"/>
<dbReference type="UniPathway" id="UPA00269">
    <property type="reaction ID" value="UER00713"/>
</dbReference>
<dbReference type="Proteomes" id="UP000000435">
    <property type="component" value="Chromosome"/>
</dbReference>
<dbReference type="GO" id="GO:0005886">
    <property type="term" value="C:plasma membrane"/>
    <property type="evidence" value="ECO:0007669"/>
    <property type="project" value="UniProtKB-SubCell"/>
</dbReference>
<dbReference type="GO" id="GO:0046872">
    <property type="term" value="F:metal ion binding"/>
    <property type="evidence" value="ECO:0007669"/>
    <property type="project" value="UniProtKB-KW"/>
</dbReference>
<dbReference type="GO" id="GO:0016653">
    <property type="term" value="F:oxidoreductase activity, acting on NAD(P)H, heme protein as acceptor"/>
    <property type="evidence" value="ECO:0007669"/>
    <property type="project" value="InterPro"/>
</dbReference>
<dbReference type="GO" id="GO:0006784">
    <property type="term" value="P:heme A biosynthetic process"/>
    <property type="evidence" value="ECO:0007669"/>
    <property type="project" value="UniProtKB-UniRule"/>
</dbReference>
<dbReference type="HAMAP" id="MF_01665">
    <property type="entry name" value="HemeA_synth_type2"/>
    <property type="match status" value="1"/>
</dbReference>
<dbReference type="InterPro" id="IPR003780">
    <property type="entry name" value="COX15/CtaA_fam"/>
</dbReference>
<dbReference type="InterPro" id="IPR023754">
    <property type="entry name" value="HemeA_Synthase_type2"/>
</dbReference>
<dbReference type="PANTHER" id="PTHR23289">
    <property type="entry name" value="CYTOCHROME C OXIDASE ASSEMBLY PROTEIN COX15"/>
    <property type="match status" value="1"/>
</dbReference>
<dbReference type="PANTHER" id="PTHR23289:SF2">
    <property type="entry name" value="CYTOCHROME C OXIDASE ASSEMBLY PROTEIN COX15 HOMOLOG"/>
    <property type="match status" value="1"/>
</dbReference>
<dbReference type="Pfam" id="PF02628">
    <property type="entry name" value="COX15-CtaA"/>
    <property type="match status" value="1"/>
</dbReference>
<reference key="1">
    <citation type="journal article" date="2006" name="J. Bacteriol.">
        <title>The genome of the obligately intracellular bacterium Ehrlichia canis reveals themes of complex membrane structure and immune evasion strategies.</title>
        <authorList>
            <person name="Mavromatis K."/>
            <person name="Doyle C.K."/>
            <person name="Lykidis A."/>
            <person name="Ivanova N."/>
            <person name="Francino M.P."/>
            <person name="Chain P."/>
            <person name="Shin M."/>
            <person name="Malfatti S."/>
            <person name="Larimer F."/>
            <person name="Copeland A."/>
            <person name="Detter J.C."/>
            <person name="Land M."/>
            <person name="Richardson P.M."/>
            <person name="Yu X.J."/>
            <person name="Walker D.H."/>
            <person name="McBride J.W."/>
            <person name="Kyrpides N.C."/>
        </authorList>
    </citation>
    <scope>NUCLEOTIDE SEQUENCE [LARGE SCALE GENOMIC DNA]</scope>
    <source>
        <strain>Jake</strain>
    </source>
</reference>
<protein>
    <recommendedName>
        <fullName evidence="1">Heme A synthase</fullName>
        <shortName evidence="1">HAS</shortName>
        <ecNumber evidence="1">1.17.99.9</ecNumber>
    </recommendedName>
    <alternativeName>
        <fullName evidence="1">Cytochrome aa3-controlling protein</fullName>
    </alternativeName>
</protein>